<reference key="1">
    <citation type="submission" date="1990-09" db="EMBL/GenBank/DDBJ databases">
        <authorList>
            <person name="Friedrich R.W."/>
            <person name="Koch W."/>
            <person name="von Maydell-Livonius U."/>
            <person name="Schrewe H."/>
            <person name="Zimmermann W."/>
        </authorList>
    </citation>
    <scope>NUCLEOTIDE SEQUENCE [GENOMIC RNA]</scope>
</reference>
<accession>P0DOH0</accession>
<name>GGAG_MLVF5</name>
<keyword id="KW-0024">Alternative initiation</keyword>
<keyword id="KW-0325">Glycoprotein</keyword>
<keyword id="KW-1032">Host cell membrane</keyword>
<keyword id="KW-1043">Host membrane</keyword>
<keyword id="KW-0472">Membrane</keyword>
<keyword id="KW-0479">Metal-binding</keyword>
<keyword id="KW-0812">Transmembrane</keyword>
<keyword id="KW-1133">Transmembrane helix</keyword>
<keyword id="KW-0862">Zinc</keyword>
<keyword id="KW-0863">Zinc-finger</keyword>
<dbReference type="EMBL" id="X02794">
    <property type="status" value="NOT_ANNOTATED_CDS"/>
    <property type="molecule type" value="Genomic_RNA"/>
</dbReference>
<dbReference type="SMR" id="P0DOH0"/>
<dbReference type="Proteomes" id="UP000007776">
    <property type="component" value="Genome"/>
</dbReference>
<dbReference type="GO" id="GO:0020002">
    <property type="term" value="C:host cell plasma membrane"/>
    <property type="evidence" value="ECO:0007669"/>
    <property type="project" value="UniProtKB-SubCell"/>
</dbReference>
<dbReference type="GO" id="GO:0016020">
    <property type="term" value="C:membrane"/>
    <property type="evidence" value="ECO:0007669"/>
    <property type="project" value="UniProtKB-KW"/>
</dbReference>
<dbReference type="GO" id="GO:0003676">
    <property type="term" value="F:nucleic acid binding"/>
    <property type="evidence" value="ECO:0007669"/>
    <property type="project" value="InterPro"/>
</dbReference>
<dbReference type="GO" id="GO:0008270">
    <property type="term" value="F:zinc ion binding"/>
    <property type="evidence" value="ECO:0007669"/>
    <property type="project" value="UniProtKB-KW"/>
</dbReference>
<dbReference type="GO" id="GO:0019068">
    <property type="term" value="P:virion assembly"/>
    <property type="evidence" value="ECO:0007669"/>
    <property type="project" value="InterPro"/>
</dbReference>
<dbReference type="Gene3D" id="1.10.150.180">
    <property type="entry name" value="Gamma-retroviral matrix domain"/>
    <property type="match status" value="1"/>
</dbReference>
<dbReference type="Gene3D" id="1.10.375.10">
    <property type="entry name" value="Human Immunodeficiency Virus Type 1 Capsid Protein"/>
    <property type="match status" value="1"/>
</dbReference>
<dbReference type="Gene3D" id="4.10.60.10">
    <property type="entry name" value="Zinc finger, CCHC-type"/>
    <property type="match status" value="1"/>
</dbReference>
<dbReference type="InterPro" id="IPR000840">
    <property type="entry name" value="G_retro_matrix"/>
</dbReference>
<dbReference type="InterPro" id="IPR036946">
    <property type="entry name" value="G_retro_matrix_sf"/>
</dbReference>
<dbReference type="InterPro" id="IPR002079">
    <property type="entry name" value="Gag_p12"/>
</dbReference>
<dbReference type="InterPro" id="IPR003036">
    <property type="entry name" value="Gag_P30"/>
</dbReference>
<dbReference type="InterPro" id="IPR008919">
    <property type="entry name" value="Retrov_capsid_N"/>
</dbReference>
<dbReference type="InterPro" id="IPR050462">
    <property type="entry name" value="Retroviral_Gag-Pol_poly"/>
</dbReference>
<dbReference type="InterPro" id="IPR010999">
    <property type="entry name" value="Retrovr_matrix"/>
</dbReference>
<dbReference type="InterPro" id="IPR001878">
    <property type="entry name" value="Znf_CCHC"/>
</dbReference>
<dbReference type="InterPro" id="IPR036875">
    <property type="entry name" value="Znf_CCHC_sf"/>
</dbReference>
<dbReference type="PANTHER" id="PTHR33166">
    <property type="entry name" value="GAG_P30 DOMAIN-CONTAINING PROTEIN"/>
    <property type="match status" value="1"/>
</dbReference>
<dbReference type="Pfam" id="PF01140">
    <property type="entry name" value="Gag_MA"/>
    <property type="match status" value="1"/>
</dbReference>
<dbReference type="Pfam" id="PF01141">
    <property type="entry name" value="Gag_p12"/>
    <property type="match status" value="1"/>
</dbReference>
<dbReference type="Pfam" id="PF02093">
    <property type="entry name" value="Gag_p30"/>
    <property type="match status" value="1"/>
</dbReference>
<dbReference type="Pfam" id="PF00098">
    <property type="entry name" value="zf-CCHC"/>
    <property type="match status" value="1"/>
</dbReference>
<dbReference type="SMART" id="SM00343">
    <property type="entry name" value="ZnF_C2HC"/>
    <property type="match status" value="1"/>
</dbReference>
<dbReference type="SUPFAM" id="SSF47836">
    <property type="entry name" value="Retroviral matrix proteins"/>
    <property type="match status" value="1"/>
</dbReference>
<dbReference type="SUPFAM" id="SSF47943">
    <property type="entry name" value="Retrovirus capsid protein, N-terminal core domain"/>
    <property type="match status" value="1"/>
</dbReference>
<dbReference type="SUPFAM" id="SSF57756">
    <property type="entry name" value="Retrovirus zinc finger-like domains"/>
    <property type="match status" value="1"/>
</dbReference>
<dbReference type="PROSITE" id="PS50158">
    <property type="entry name" value="ZF_CCHC"/>
    <property type="match status" value="1"/>
</dbReference>
<sequence length="627" mass="70703">LGDVPRTSGAIFVARPESNHPDRFGLFGAPPLEEGYVVLVGDGRLKQFPPPSEFLLSVWNRSRAARLVCCSIVLCCLCLTVFLYLSENMGQTVTTPLSLTLDHWKDVERTAHNQSVEIRKRRWVTLCSAEWPTFNVGWPRDGTFNPDIITQVKIKVFSSGPHGHPDQVPYIVTWEALAADPPPWVKPFVHPKPPPLLLPPSAPSLPPEPPFPTPPQSSLYPALTSPLNTKPRPQVLPDSGGPLIDLLTEDPPPYRDPGPSSSDGNGGSGEVAPTEGAPDSSPMVSRLRGRREPPVADSTTSQAFPLRQGGNGQFQYWPFSSSDLYNWKNNNPSFSEDPAKLTALIESVLLTHQPTWDDCQQLLGTLLTGEEKQRVLLEARKAVRGEDGRPTQLPNDINDAFPLERPDWDYNTQRGRNHLVHYRQLLLAGLQNAGRSPTNLAKVKGITQGPNESPSAFLERLKEAYRRYTPYDPEDPGQETNVAMSFIWQSAPDIGRKLERLEDLKSKTLGDLVREAEKIFNKRETPEEREERIRRETEEKEERRRAEDEQREKERDRRRHREMSKLLATVISGQRQDRQGGERRRPQLDHDQCAYCKEKGHWARDCPKKPRGPRGPRPQASLLTLDD</sequence>
<proteinExistence type="inferred from homology"/>
<feature type="chain" id="PRO_0000441132" description="Glyco-Gag protein">
    <location>
        <begin position="1"/>
        <end position="627"/>
    </location>
</feature>
<feature type="topological domain" description="Cytoplasmic" evidence="6">
    <location>
        <begin position="1"/>
        <end position="63"/>
    </location>
</feature>
<feature type="transmembrane region" description="Helical" evidence="2">
    <location>
        <begin position="64"/>
        <end position="86"/>
    </location>
</feature>
<feature type="topological domain" description="Extracellular" evidence="6">
    <location>
        <begin position="87"/>
        <end position="627"/>
    </location>
</feature>
<feature type="zinc finger region" description="CCHC-type" evidence="3">
    <location>
        <begin position="593"/>
        <end position="608"/>
    </location>
</feature>
<feature type="region of interest" description="Disordered" evidence="5">
    <location>
        <begin position="199"/>
        <end position="310"/>
    </location>
</feature>
<feature type="region of interest" description="Disordered" evidence="5">
    <location>
        <begin position="523"/>
        <end position="627"/>
    </location>
</feature>
<feature type="compositionally biased region" description="Pro residues" evidence="5">
    <location>
        <begin position="199"/>
        <end position="215"/>
    </location>
</feature>
<feature type="compositionally biased region" description="Basic and acidic residues" evidence="5">
    <location>
        <begin position="523"/>
        <end position="555"/>
    </location>
</feature>
<feature type="compositionally biased region" description="Basic and acidic residues" evidence="5">
    <location>
        <begin position="575"/>
        <end position="608"/>
    </location>
</feature>
<feature type="glycosylation site" description="N-linked (GlcNAc...) asparagine; by host" evidence="4">
    <location>
        <position position="113"/>
    </location>
</feature>
<organism>
    <name type="scientific">Friend murine leukemia virus (isolate 57)</name>
    <name type="common">FrMLV</name>
    <dbReference type="NCBI Taxonomy" id="11796"/>
    <lineage>
        <taxon>Viruses</taxon>
        <taxon>Riboviria</taxon>
        <taxon>Pararnavirae</taxon>
        <taxon>Artverviricota</taxon>
        <taxon>Revtraviricetes</taxon>
        <taxon>Ortervirales</taxon>
        <taxon>Retroviridae</taxon>
        <taxon>Orthoretrovirinae</taxon>
        <taxon>Gammaretrovirus</taxon>
        <taxon>Murine leukemia virus</taxon>
    </lineage>
</organism>
<organismHost>
    <name type="scientific">Mus musculus</name>
    <name type="common">Mouse</name>
    <dbReference type="NCBI Taxonomy" id="10090"/>
</organismHost>
<protein>
    <recommendedName>
        <fullName>Glyco-Gag protein</fullName>
    </recommendedName>
    <alternativeName>
        <fullName>Gross cell surface antigen</fullName>
    </alternativeName>
    <alternativeName>
        <fullName>glycosylated Pr80 gag</fullName>
        <shortName>gPr80 Gag</shortName>
        <shortName>gag-gPr80</shortName>
    </alternativeName>
</protein>
<evidence type="ECO:0000250" key="1">
    <source>
        <dbReference type="UniProtKB" id="P0DOG8"/>
    </source>
</evidence>
<evidence type="ECO:0000255" key="2"/>
<evidence type="ECO:0000255" key="3">
    <source>
        <dbReference type="PROSITE-ProRule" id="PRU00047"/>
    </source>
</evidence>
<evidence type="ECO:0000255" key="4">
    <source>
        <dbReference type="PROSITE-ProRule" id="PRU00498"/>
    </source>
</evidence>
<evidence type="ECO:0000256" key="5">
    <source>
        <dbReference type="SAM" id="MobiDB-lite"/>
    </source>
</evidence>
<evidence type="ECO:0000305" key="6"/>
<comment type="function">
    <text evidence="1">Plays a role in viral particle release. Presumably acts by facilitating the fission of the virion bud at the cell surface. May prevent the antiviral activity of murine APOBEC3.</text>
</comment>
<comment type="subcellular location">
    <subcellularLocation>
        <location evidence="1 2">Host cell membrane</location>
        <topology evidence="1">Single-pass membrane protein</topology>
    </subcellularLocation>
</comment>
<comment type="alternative products">
    <event type="alternative initiation"/>
    <isoform>
        <id>P0DOH0-1</id>
        <name>Glyco-Gag protein</name>
        <sequence type="displayed"/>
    </isoform>
    <isoform>
        <id>P26807-1</id>
        <name>Gag polyprotein</name>
        <sequence type="external"/>
    </isoform>
</comment>
<comment type="PTM">
    <text evidence="1">Glycosylated by host.</text>
</comment>
<comment type="PTM">
    <text evidence="1">Cleaved by host near the middle of the molecule, releasing the c-terminal half containing capsid and nucleoprotein domains op GAG.</text>
</comment>